<name>MUTL_STRT2</name>
<reference key="1">
    <citation type="journal article" date="2004" name="Nat. Biotechnol.">
        <title>Complete sequence and comparative genome analysis of the dairy bacterium Streptococcus thermophilus.</title>
        <authorList>
            <person name="Bolotin A."/>
            <person name="Quinquis B."/>
            <person name="Renault P."/>
            <person name="Sorokin A."/>
            <person name="Ehrlich S.D."/>
            <person name="Kulakauskas S."/>
            <person name="Lapidus A."/>
            <person name="Goltsman E."/>
            <person name="Mazur M."/>
            <person name="Pusch G.D."/>
            <person name="Fonstein M."/>
            <person name="Overbeek R."/>
            <person name="Kyprides N."/>
            <person name="Purnelle B."/>
            <person name="Prozzi D."/>
            <person name="Ngui K."/>
            <person name="Masuy D."/>
            <person name="Hancy F."/>
            <person name="Burteau S."/>
            <person name="Boutry M."/>
            <person name="Delcour J."/>
            <person name="Goffeau A."/>
            <person name="Hols P."/>
        </authorList>
    </citation>
    <scope>NUCLEOTIDE SEQUENCE [LARGE SCALE GENOMIC DNA]</scope>
    <source>
        <strain>ATCC BAA-250 / LMG 18311</strain>
    </source>
</reference>
<organism>
    <name type="scientific">Streptococcus thermophilus (strain ATCC BAA-250 / LMG 18311)</name>
    <dbReference type="NCBI Taxonomy" id="264199"/>
    <lineage>
        <taxon>Bacteria</taxon>
        <taxon>Bacillati</taxon>
        <taxon>Bacillota</taxon>
        <taxon>Bacilli</taxon>
        <taxon>Lactobacillales</taxon>
        <taxon>Streptococcaceae</taxon>
        <taxon>Streptococcus</taxon>
    </lineage>
</organism>
<keyword id="KW-0227">DNA damage</keyword>
<keyword id="KW-0234">DNA repair</keyword>
<keyword id="KW-1185">Reference proteome</keyword>
<proteinExistence type="inferred from homology"/>
<feature type="chain" id="PRO_1000010096" description="DNA mismatch repair protein MutL">
    <location>
        <begin position="1"/>
        <end position="647"/>
    </location>
</feature>
<feature type="region of interest" description="Disordered" evidence="2">
    <location>
        <begin position="393"/>
        <end position="423"/>
    </location>
</feature>
<feature type="compositionally biased region" description="Basic and acidic residues" evidence="2">
    <location>
        <begin position="409"/>
        <end position="423"/>
    </location>
</feature>
<comment type="function">
    <text evidence="1">This protein is involved in the repair of mismatches in DNA. It is required for dam-dependent methyl-directed DNA mismatch repair. May act as a 'molecular matchmaker', a protein that promotes the formation of a stable complex between two or more DNA-binding proteins in an ATP-dependent manner without itself being part of a final effector complex.</text>
</comment>
<comment type="similarity">
    <text evidence="1">Belongs to the DNA mismatch repair MutL/HexB family.</text>
</comment>
<evidence type="ECO:0000255" key="1">
    <source>
        <dbReference type="HAMAP-Rule" id="MF_00149"/>
    </source>
</evidence>
<evidence type="ECO:0000256" key="2">
    <source>
        <dbReference type="SAM" id="MobiDB-lite"/>
    </source>
</evidence>
<sequence length="647" mass="72505">MPKIIELPEVLANQIAAGEVVERPASVVKELVENAIDAGSTQITIEVEESGLSKIQITDNGEGMAQADVAMSLRRHATSKIKNQGDLFRIRTLGFRGEALPSIASISHLTIVTAADGEVYGTKLVAKGGEIESQDPISTPVGTKITVENLFYNTPARLKYMKSLQAELAHIVDVVNRLSLAHPEVAFTLLNDGRQLTQTSGTGDLRQAIAGIYGLTTAKKMVEISNSDLDFEVSGYVSLPELTRANRNYITILINGRYIKNFLLNRAIFDGYGSKLMVGRFPIAVIDIQIDPYLADVNVHPTKQEVRISKEKELMALIKSAIAQSLREQDLIPDALENLAKSSTRGATRSVQTSLPLKQTNLYYDSSRNDFFVTPETVQEDIKPLVSKSESSVSLVANKQQPTVKQAKRSADDSDSEHGKLDYKNKSKLKRMLENLTNEETSTFPELEFFGQMHGTYLFAQGQGGLYIIDQHAAQERVKYEYYREKIGVVDSSLQQLLVPYLFEFSGSDYISLQEKMPLLNQVCIYLEPYGNNTFILREHPIWMKEEEIESAVYEMCDMLLLTNEVSVKTYRAELAIMMSCKRSIKANHALDDYSARDLLVQLAQCKNPYNCPHGRPVLVNFTKSDMEKMFRRIQENHTSLRDLGKY</sequence>
<gene>
    <name evidence="1" type="primary">mutL</name>
    <name type="ordered locus">stu0054</name>
</gene>
<protein>
    <recommendedName>
        <fullName evidence="1">DNA mismatch repair protein MutL</fullName>
    </recommendedName>
</protein>
<dbReference type="EMBL" id="CP000023">
    <property type="protein sequence ID" value="AAV59784.1"/>
    <property type="molecule type" value="Genomic_DNA"/>
</dbReference>
<dbReference type="RefSeq" id="WP_011225282.1">
    <property type="nucleotide sequence ID" value="NC_006448.1"/>
</dbReference>
<dbReference type="SMR" id="Q5M6H7"/>
<dbReference type="STRING" id="264199.stu0054"/>
<dbReference type="GeneID" id="66897972"/>
<dbReference type="KEGG" id="stl:stu0054"/>
<dbReference type="PATRIC" id="fig|264199.4.peg.57"/>
<dbReference type="eggNOG" id="COG0323">
    <property type="taxonomic scope" value="Bacteria"/>
</dbReference>
<dbReference type="HOGENOM" id="CLU_004131_5_1_9"/>
<dbReference type="Proteomes" id="UP000001170">
    <property type="component" value="Chromosome"/>
</dbReference>
<dbReference type="GO" id="GO:0032300">
    <property type="term" value="C:mismatch repair complex"/>
    <property type="evidence" value="ECO:0007669"/>
    <property type="project" value="InterPro"/>
</dbReference>
<dbReference type="GO" id="GO:0005524">
    <property type="term" value="F:ATP binding"/>
    <property type="evidence" value="ECO:0007669"/>
    <property type="project" value="InterPro"/>
</dbReference>
<dbReference type="GO" id="GO:0016887">
    <property type="term" value="F:ATP hydrolysis activity"/>
    <property type="evidence" value="ECO:0007669"/>
    <property type="project" value="InterPro"/>
</dbReference>
<dbReference type="GO" id="GO:0140664">
    <property type="term" value="F:ATP-dependent DNA damage sensor activity"/>
    <property type="evidence" value="ECO:0007669"/>
    <property type="project" value="InterPro"/>
</dbReference>
<dbReference type="GO" id="GO:0030983">
    <property type="term" value="F:mismatched DNA binding"/>
    <property type="evidence" value="ECO:0007669"/>
    <property type="project" value="InterPro"/>
</dbReference>
<dbReference type="GO" id="GO:0006298">
    <property type="term" value="P:mismatch repair"/>
    <property type="evidence" value="ECO:0007669"/>
    <property type="project" value="UniProtKB-UniRule"/>
</dbReference>
<dbReference type="CDD" id="cd16926">
    <property type="entry name" value="HATPase_MutL-MLH-PMS-like"/>
    <property type="match status" value="1"/>
</dbReference>
<dbReference type="CDD" id="cd00782">
    <property type="entry name" value="MutL_Trans"/>
    <property type="match status" value="1"/>
</dbReference>
<dbReference type="FunFam" id="3.30.1370.100:FF:000004">
    <property type="entry name" value="DNA mismatch repair endonuclease MutL"/>
    <property type="match status" value="1"/>
</dbReference>
<dbReference type="FunFam" id="3.30.565.10:FF:000003">
    <property type="entry name" value="DNA mismatch repair endonuclease MutL"/>
    <property type="match status" value="1"/>
</dbReference>
<dbReference type="Gene3D" id="3.30.230.10">
    <property type="match status" value="1"/>
</dbReference>
<dbReference type="Gene3D" id="3.30.565.10">
    <property type="entry name" value="Histidine kinase-like ATPase, C-terminal domain"/>
    <property type="match status" value="1"/>
</dbReference>
<dbReference type="Gene3D" id="3.30.1540.20">
    <property type="entry name" value="MutL, C-terminal domain, dimerisation subdomain"/>
    <property type="match status" value="1"/>
</dbReference>
<dbReference type="Gene3D" id="3.30.1370.100">
    <property type="entry name" value="MutL, C-terminal domain, regulatory subdomain"/>
    <property type="match status" value="1"/>
</dbReference>
<dbReference type="HAMAP" id="MF_00149">
    <property type="entry name" value="DNA_mis_repair"/>
    <property type="match status" value="1"/>
</dbReference>
<dbReference type="InterPro" id="IPR014762">
    <property type="entry name" value="DNA_mismatch_repair_CS"/>
</dbReference>
<dbReference type="InterPro" id="IPR020667">
    <property type="entry name" value="DNA_mismatch_repair_MutL"/>
</dbReference>
<dbReference type="InterPro" id="IPR013507">
    <property type="entry name" value="DNA_mismatch_S5_2-like"/>
</dbReference>
<dbReference type="InterPro" id="IPR036890">
    <property type="entry name" value="HATPase_C_sf"/>
</dbReference>
<dbReference type="InterPro" id="IPR002099">
    <property type="entry name" value="MutL/Mlh/PMS"/>
</dbReference>
<dbReference type="InterPro" id="IPR038973">
    <property type="entry name" value="MutL/Mlh/Pms-like"/>
</dbReference>
<dbReference type="InterPro" id="IPR014790">
    <property type="entry name" value="MutL_C"/>
</dbReference>
<dbReference type="InterPro" id="IPR042120">
    <property type="entry name" value="MutL_C_dimsub"/>
</dbReference>
<dbReference type="InterPro" id="IPR042121">
    <property type="entry name" value="MutL_C_regsub"/>
</dbReference>
<dbReference type="InterPro" id="IPR037198">
    <property type="entry name" value="MutL_C_sf"/>
</dbReference>
<dbReference type="InterPro" id="IPR020568">
    <property type="entry name" value="Ribosomal_Su5_D2-typ_SF"/>
</dbReference>
<dbReference type="InterPro" id="IPR014721">
    <property type="entry name" value="Ribsml_uS5_D2-typ_fold_subgr"/>
</dbReference>
<dbReference type="NCBIfam" id="TIGR00585">
    <property type="entry name" value="mutl"/>
    <property type="match status" value="1"/>
</dbReference>
<dbReference type="NCBIfam" id="NF000950">
    <property type="entry name" value="PRK00095.1-3"/>
    <property type="match status" value="1"/>
</dbReference>
<dbReference type="PANTHER" id="PTHR10073">
    <property type="entry name" value="DNA MISMATCH REPAIR PROTEIN MLH, PMS, MUTL"/>
    <property type="match status" value="1"/>
</dbReference>
<dbReference type="PANTHER" id="PTHR10073:SF12">
    <property type="entry name" value="DNA MISMATCH REPAIR PROTEIN MLH1"/>
    <property type="match status" value="1"/>
</dbReference>
<dbReference type="Pfam" id="PF01119">
    <property type="entry name" value="DNA_mis_repair"/>
    <property type="match status" value="1"/>
</dbReference>
<dbReference type="Pfam" id="PF13589">
    <property type="entry name" value="HATPase_c_3"/>
    <property type="match status" value="1"/>
</dbReference>
<dbReference type="Pfam" id="PF08676">
    <property type="entry name" value="MutL_C"/>
    <property type="match status" value="1"/>
</dbReference>
<dbReference type="SMART" id="SM01340">
    <property type="entry name" value="DNA_mis_repair"/>
    <property type="match status" value="1"/>
</dbReference>
<dbReference type="SMART" id="SM00853">
    <property type="entry name" value="MutL_C"/>
    <property type="match status" value="1"/>
</dbReference>
<dbReference type="SUPFAM" id="SSF55874">
    <property type="entry name" value="ATPase domain of HSP90 chaperone/DNA topoisomerase II/histidine kinase"/>
    <property type="match status" value="1"/>
</dbReference>
<dbReference type="SUPFAM" id="SSF118116">
    <property type="entry name" value="DNA mismatch repair protein MutL"/>
    <property type="match status" value="1"/>
</dbReference>
<dbReference type="SUPFAM" id="SSF54211">
    <property type="entry name" value="Ribosomal protein S5 domain 2-like"/>
    <property type="match status" value="1"/>
</dbReference>
<dbReference type="PROSITE" id="PS00058">
    <property type="entry name" value="DNA_MISMATCH_REPAIR_1"/>
    <property type="match status" value="1"/>
</dbReference>
<accession>Q5M6H7</accession>